<evidence type="ECO:0000305" key="1"/>
<proteinExistence type="inferred from homology"/>
<comment type="similarity">
    <text evidence="1">Belongs to the UPF0102 family.</text>
</comment>
<name>Y1656_HAEIN</name>
<organism>
    <name type="scientific">Haemophilus influenzae (strain ATCC 51907 / DSM 11121 / KW20 / Rd)</name>
    <dbReference type="NCBI Taxonomy" id="71421"/>
    <lineage>
        <taxon>Bacteria</taxon>
        <taxon>Pseudomonadati</taxon>
        <taxon>Pseudomonadota</taxon>
        <taxon>Gammaproteobacteria</taxon>
        <taxon>Pasteurellales</taxon>
        <taxon>Pasteurellaceae</taxon>
        <taxon>Haemophilus</taxon>
    </lineage>
</organism>
<accession>P45300</accession>
<gene>
    <name type="ordered locus">HI_1656</name>
</gene>
<feature type="chain" id="PRO_0000167354" description="UPF0102 protein HI_1656">
    <location>
        <begin position="1"/>
        <end position="119"/>
    </location>
</feature>
<dbReference type="EMBL" id="L42023">
    <property type="protein sequence ID" value="AAC23300.1"/>
    <property type="molecule type" value="Genomic_DNA"/>
</dbReference>
<dbReference type="PIR" id="C64174">
    <property type="entry name" value="C64174"/>
</dbReference>
<dbReference type="RefSeq" id="NP_439798.1">
    <property type="nucleotide sequence ID" value="NC_000907.1"/>
</dbReference>
<dbReference type="SMR" id="P45300"/>
<dbReference type="STRING" id="71421.HI_1656"/>
<dbReference type="DNASU" id="950807"/>
<dbReference type="EnsemblBacteria" id="AAC23300">
    <property type="protein sequence ID" value="AAC23300"/>
    <property type="gene ID" value="HI_1656"/>
</dbReference>
<dbReference type="KEGG" id="hin:HI_1656"/>
<dbReference type="PATRIC" id="fig|71421.8.peg.1734"/>
<dbReference type="eggNOG" id="COG0792">
    <property type="taxonomic scope" value="Bacteria"/>
</dbReference>
<dbReference type="HOGENOM" id="CLU_115353_1_0_6"/>
<dbReference type="OrthoDB" id="9794876at2"/>
<dbReference type="PhylomeDB" id="P45300"/>
<dbReference type="BioCyc" id="HINF71421:G1GJ1-1673-MONOMER"/>
<dbReference type="Proteomes" id="UP000000579">
    <property type="component" value="Chromosome"/>
</dbReference>
<dbReference type="GO" id="GO:0003676">
    <property type="term" value="F:nucleic acid binding"/>
    <property type="evidence" value="ECO:0007669"/>
    <property type="project" value="InterPro"/>
</dbReference>
<dbReference type="Gene3D" id="3.40.1350.10">
    <property type="match status" value="1"/>
</dbReference>
<dbReference type="HAMAP" id="MF_00048">
    <property type="entry name" value="UPF0102"/>
    <property type="match status" value="1"/>
</dbReference>
<dbReference type="InterPro" id="IPR011335">
    <property type="entry name" value="Restrct_endonuc-II-like"/>
</dbReference>
<dbReference type="InterPro" id="IPR011856">
    <property type="entry name" value="tRNA_endonuc-like_dom_sf"/>
</dbReference>
<dbReference type="InterPro" id="IPR003509">
    <property type="entry name" value="UPF0102_YraN-like"/>
</dbReference>
<dbReference type="NCBIfam" id="NF009150">
    <property type="entry name" value="PRK12497.1-3"/>
    <property type="match status" value="1"/>
</dbReference>
<dbReference type="NCBIfam" id="TIGR00252">
    <property type="entry name" value="YraN family protein"/>
    <property type="match status" value="1"/>
</dbReference>
<dbReference type="PANTHER" id="PTHR34039">
    <property type="entry name" value="UPF0102 PROTEIN YRAN"/>
    <property type="match status" value="1"/>
</dbReference>
<dbReference type="PANTHER" id="PTHR34039:SF1">
    <property type="entry name" value="UPF0102 PROTEIN YRAN"/>
    <property type="match status" value="1"/>
</dbReference>
<dbReference type="Pfam" id="PF02021">
    <property type="entry name" value="UPF0102"/>
    <property type="match status" value="1"/>
</dbReference>
<dbReference type="SUPFAM" id="SSF52980">
    <property type="entry name" value="Restriction endonuclease-like"/>
    <property type="match status" value="1"/>
</dbReference>
<sequence length="119" mass="13812">MFSLKRQQGASFEHQARLFLESKGLIFIAANQNFKCGELDLIMNDKETIVFVEVRQRSHSAYGSAIESVDWRKQQKWLDAANLWLAKQNMSLEDANCRFDLIAFGKTPQDIQWIPNFLD</sequence>
<keyword id="KW-1185">Reference proteome</keyword>
<protein>
    <recommendedName>
        <fullName>UPF0102 protein HI_1656</fullName>
    </recommendedName>
</protein>
<reference key="1">
    <citation type="journal article" date="1995" name="Science">
        <title>Whole-genome random sequencing and assembly of Haemophilus influenzae Rd.</title>
        <authorList>
            <person name="Fleischmann R.D."/>
            <person name="Adams M.D."/>
            <person name="White O."/>
            <person name="Clayton R.A."/>
            <person name="Kirkness E.F."/>
            <person name="Kerlavage A.R."/>
            <person name="Bult C.J."/>
            <person name="Tomb J.-F."/>
            <person name="Dougherty B.A."/>
            <person name="Merrick J.M."/>
            <person name="McKenney K."/>
            <person name="Sutton G.G."/>
            <person name="FitzHugh W."/>
            <person name="Fields C.A."/>
            <person name="Gocayne J.D."/>
            <person name="Scott J.D."/>
            <person name="Shirley R."/>
            <person name="Liu L.-I."/>
            <person name="Glodek A."/>
            <person name="Kelley J.M."/>
            <person name="Weidman J.F."/>
            <person name="Phillips C.A."/>
            <person name="Spriggs T."/>
            <person name="Hedblom E."/>
            <person name="Cotton M.D."/>
            <person name="Utterback T.R."/>
            <person name="Hanna M.C."/>
            <person name="Nguyen D.T."/>
            <person name="Saudek D.M."/>
            <person name="Brandon R.C."/>
            <person name="Fine L.D."/>
            <person name="Fritchman J.L."/>
            <person name="Fuhrmann J.L."/>
            <person name="Geoghagen N.S.M."/>
            <person name="Gnehm C.L."/>
            <person name="McDonald L.A."/>
            <person name="Small K.V."/>
            <person name="Fraser C.M."/>
            <person name="Smith H.O."/>
            <person name="Venter J.C."/>
        </authorList>
    </citation>
    <scope>NUCLEOTIDE SEQUENCE [LARGE SCALE GENOMIC DNA]</scope>
    <source>
        <strain>ATCC 51907 / DSM 11121 / KW20 / Rd</strain>
    </source>
</reference>